<proteinExistence type="inferred from homology"/>
<organism>
    <name type="scientific">Synechococcus sp. (strain WH7803)</name>
    <dbReference type="NCBI Taxonomy" id="32051"/>
    <lineage>
        <taxon>Bacteria</taxon>
        <taxon>Bacillati</taxon>
        <taxon>Cyanobacteriota</taxon>
        <taxon>Cyanophyceae</taxon>
        <taxon>Synechococcales</taxon>
        <taxon>Synechococcaceae</taxon>
        <taxon>Synechococcus</taxon>
    </lineage>
</organism>
<comment type="function">
    <text evidence="1">This protein binds to 23S rRNA in the presence of protein L20.</text>
</comment>
<comment type="subunit">
    <text evidence="1">Part of the 50S ribosomal subunit. Contacts protein L20.</text>
</comment>
<comment type="similarity">
    <text evidence="1">Belongs to the bacterial ribosomal protein bL21 family.</text>
</comment>
<protein>
    <recommendedName>
        <fullName evidence="1">Large ribosomal subunit protein bL21</fullName>
    </recommendedName>
    <alternativeName>
        <fullName evidence="2">50S ribosomal protein L21</fullName>
    </alternativeName>
</protein>
<gene>
    <name evidence="1" type="primary">rplU</name>
    <name evidence="1" type="synonym">rpl21</name>
    <name type="ordered locus">SynWH7803_1967</name>
</gene>
<dbReference type="EMBL" id="CT971583">
    <property type="protein sequence ID" value="CAK24393.1"/>
    <property type="molecule type" value="Genomic_DNA"/>
</dbReference>
<dbReference type="SMR" id="A5GN78"/>
<dbReference type="STRING" id="32051.SynWH7803_1967"/>
<dbReference type="KEGG" id="syx:SynWH7803_1967"/>
<dbReference type="eggNOG" id="COG0261">
    <property type="taxonomic scope" value="Bacteria"/>
</dbReference>
<dbReference type="HOGENOM" id="CLU_061463_6_0_3"/>
<dbReference type="OrthoDB" id="9813334at2"/>
<dbReference type="Proteomes" id="UP000001566">
    <property type="component" value="Chromosome"/>
</dbReference>
<dbReference type="GO" id="GO:0005737">
    <property type="term" value="C:cytoplasm"/>
    <property type="evidence" value="ECO:0007669"/>
    <property type="project" value="UniProtKB-ARBA"/>
</dbReference>
<dbReference type="GO" id="GO:1990904">
    <property type="term" value="C:ribonucleoprotein complex"/>
    <property type="evidence" value="ECO:0007669"/>
    <property type="project" value="UniProtKB-KW"/>
</dbReference>
<dbReference type="GO" id="GO:0005840">
    <property type="term" value="C:ribosome"/>
    <property type="evidence" value="ECO:0007669"/>
    <property type="project" value="UniProtKB-KW"/>
</dbReference>
<dbReference type="GO" id="GO:0019843">
    <property type="term" value="F:rRNA binding"/>
    <property type="evidence" value="ECO:0007669"/>
    <property type="project" value="UniProtKB-UniRule"/>
</dbReference>
<dbReference type="GO" id="GO:0003735">
    <property type="term" value="F:structural constituent of ribosome"/>
    <property type="evidence" value="ECO:0007669"/>
    <property type="project" value="InterPro"/>
</dbReference>
<dbReference type="GO" id="GO:0006412">
    <property type="term" value="P:translation"/>
    <property type="evidence" value="ECO:0007669"/>
    <property type="project" value="UniProtKB-UniRule"/>
</dbReference>
<dbReference type="HAMAP" id="MF_01363">
    <property type="entry name" value="Ribosomal_bL21"/>
    <property type="match status" value="1"/>
</dbReference>
<dbReference type="InterPro" id="IPR028909">
    <property type="entry name" value="bL21-like"/>
</dbReference>
<dbReference type="InterPro" id="IPR036164">
    <property type="entry name" value="bL21-like_sf"/>
</dbReference>
<dbReference type="InterPro" id="IPR001787">
    <property type="entry name" value="Ribosomal_bL21"/>
</dbReference>
<dbReference type="InterPro" id="IPR018258">
    <property type="entry name" value="Ribosomal_bL21_CS"/>
</dbReference>
<dbReference type="NCBIfam" id="TIGR00061">
    <property type="entry name" value="L21"/>
    <property type="match status" value="1"/>
</dbReference>
<dbReference type="PANTHER" id="PTHR21349">
    <property type="entry name" value="50S RIBOSOMAL PROTEIN L21"/>
    <property type="match status" value="1"/>
</dbReference>
<dbReference type="PANTHER" id="PTHR21349:SF0">
    <property type="entry name" value="LARGE RIBOSOMAL SUBUNIT PROTEIN BL21M"/>
    <property type="match status" value="1"/>
</dbReference>
<dbReference type="Pfam" id="PF00829">
    <property type="entry name" value="Ribosomal_L21p"/>
    <property type="match status" value="1"/>
</dbReference>
<dbReference type="SUPFAM" id="SSF141091">
    <property type="entry name" value="L21p-like"/>
    <property type="match status" value="1"/>
</dbReference>
<dbReference type="PROSITE" id="PS01169">
    <property type="entry name" value="RIBOSOMAL_L21"/>
    <property type="match status" value="1"/>
</dbReference>
<reference key="1">
    <citation type="submission" date="2006-05" db="EMBL/GenBank/DDBJ databases">
        <authorList>
            <consortium name="Genoscope"/>
        </authorList>
    </citation>
    <scope>NUCLEOTIDE SEQUENCE [LARGE SCALE GENOMIC DNA]</scope>
    <source>
        <strain>WH7803</strain>
    </source>
</reference>
<name>RL21_SYNPW</name>
<evidence type="ECO:0000255" key="1">
    <source>
        <dbReference type="HAMAP-Rule" id="MF_01363"/>
    </source>
</evidence>
<evidence type="ECO:0000305" key="2"/>
<keyword id="KW-1185">Reference proteome</keyword>
<keyword id="KW-0687">Ribonucleoprotein</keyword>
<keyword id="KW-0689">Ribosomal protein</keyword>
<keyword id="KW-0694">RNA-binding</keyword>
<keyword id="KW-0699">rRNA-binding</keyword>
<sequence>MAETSTSQSAAPDTGTYAIVEASGQQFWLQPNRYYDLDRLQADVDATVTLDNVLLVKDATGTTLGKPYVKDASVELKVMAHRRGPKVIVYKMRPKKKTRRKNGHRQELTRVMVQSISVGGKSIS</sequence>
<feature type="chain" id="PRO_1000067910" description="Large ribosomal subunit protein bL21">
    <location>
        <begin position="1"/>
        <end position="124"/>
    </location>
</feature>
<accession>A5GN78</accession>